<proteinExistence type="evidence at protein level"/>
<comment type="catalytic activity">
    <reaction>
        <text>L-seryl-[protein] + ATP = O-phospho-L-seryl-[protein] + ADP + H(+)</text>
        <dbReference type="Rhea" id="RHEA:17989"/>
        <dbReference type="Rhea" id="RHEA-COMP:9863"/>
        <dbReference type="Rhea" id="RHEA-COMP:11604"/>
        <dbReference type="ChEBI" id="CHEBI:15378"/>
        <dbReference type="ChEBI" id="CHEBI:29999"/>
        <dbReference type="ChEBI" id="CHEBI:30616"/>
        <dbReference type="ChEBI" id="CHEBI:83421"/>
        <dbReference type="ChEBI" id="CHEBI:456216"/>
        <dbReference type="EC" id="2.7.11.1"/>
    </reaction>
</comment>
<comment type="catalytic activity">
    <reaction>
        <text>L-threonyl-[protein] + ATP = O-phospho-L-threonyl-[protein] + ADP + H(+)</text>
        <dbReference type="Rhea" id="RHEA:46608"/>
        <dbReference type="Rhea" id="RHEA-COMP:11060"/>
        <dbReference type="Rhea" id="RHEA-COMP:11605"/>
        <dbReference type="ChEBI" id="CHEBI:15378"/>
        <dbReference type="ChEBI" id="CHEBI:30013"/>
        <dbReference type="ChEBI" id="CHEBI:30616"/>
        <dbReference type="ChEBI" id="CHEBI:61977"/>
        <dbReference type="ChEBI" id="CHEBI:456216"/>
        <dbReference type="EC" id="2.7.11.1"/>
    </reaction>
</comment>
<comment type="interaction">
    <interactant intactId="EBI-9771">
        <id>P34244</id>
    </interactant>
    <interactant intactId="EBI-8437">
        <id>P32485</id>
        <label>HOG1</label>
    </interactant>
    <organismsDiffer>false</organismsDiffer>
    <experiments>2</experiments>
</comment>
<comment type="subcellular location">
    <subcellularLocation>
        <location evidence="4">Bud neck</location>
    </subcellularLocation>
</comment>
<comment type="similarity">
    <text evidence="5">Belongs to the protein kinase superfamily. CAMK Ser/Thr protein kinase family. NIM1 subfamily.</text>
</comment>
<sequence length="1518" mass="169607">MTGHVSKTSHVPKGRPSSLAKKAAKRAMAKVNSNPKRASGHLERVVQSVNDATKRLSQPDSTVSVATKSSKRKSRDTVGPWKLGKTLGKGSSGRVRLAKNMETGQLAAIKIVPKKKAFVHCSNNGTVPNSYSSSMVTSNVSSPSIASREHSNHSQTNPYGIEREIVIMKLISHTNVMALFEVWENKSELYLVLEYVDGGELFDYLVSKGKLPEREAIHYFKQIVEGVSYCHSFNICHRDLKPENLLLDKKNRRIKIADFGMAALELPNKLLKTSCGSPHYASPEIVMGRPYHGGPSDVWSCGIVLFALLTGHLPFNDDNIKKLLLKVQSGKYQMPSNLSSEARDLISKILVIDPEKRITTQEILKHPLIKKYDDLPVNKVLRKMRKDNMARGKSNSDLHLLNNVSPSIVTLHSKGEIDESILRSLQILWHGVSRELITAKLLQKPMSEEKLFYSLLLQYKQRHSISLSSSSENKKSATESSVNEPRIEYASKTANNTGLRSENNDVKTLHSLEIHSEDTSTVNQNNAITGVNTEINAPVLAQKSQFSINTLSQPESDKAEAEAVTLPPAIPIFNASSSRIFRNSYTSISSRSRRSLRLSNSRLSLSASTSRETVHDNEMPLPQLPKSPSRYSLSRRAIHASPSTKSIHKSLSRKNIAATVAARRTLQNSASKRSLYSLQSISKRSLNLNDLLVFDDPLPSKKPASENVNKSEPHSLESDSDFEILCDQILFGNALDRILEEEEDNEKERDTQRQRQNDTKSSADTFTISGVSTNKENEGPEYPTKIEKNQFNMSYKPSENMSGLSSFPIFEKENTLSSSYLEEQKPKRAALSDITNSFNKMNKQEGMRIEKKIQREQLQKKNDRPSPLKPIQHQELRVNSLPNDQGKPSLSLDPRRNISQPVNSKVESLLQGLKFKKEPASHWTHERGSLFMSEHVEDEKPVKASDVSIESSYVPLTTVATSSRDPSVLAESSTIQKPMLSLPSSFLNTSMTFKNLSQILADDGDDKHLSVPQNQSRSVAMSHPLRKQSAKISLTPRSNLNANLSVKRNQGSPGSYLSNDLDGISDMTFAMEIPTNTFTAQAIQLMNNDTDNNKINTSPKASSFTKEKVIKSAAYISKEKEPDNSDTNYIPDYTIPNTYDEKAINIFEDAPSDEGSLNTSSSESDSRASVHRKAVSIDTMATTNVLTPATNVRVSLYWNNNSSGIPRETTEEILSKLRLSPENPSNTHMQKRFSSTRGSRDSNALGISQSLQSMFKDLEEDQDGHTSQADILESSMSYSKRRPSEESVNPKQRVTMLFDEEEEESKKVGGGKIKEEHTKLDNKISEESSQLVLPVVEKKENANNTENNYSKIPKPSTIKVTKDTAMESNTQTHTKKPILKSVQNVEVEEAPSSDKKNWFVKLFQNFSSHNNATKASKNHVTNISFDDAHMLTLNEFNKNSIDYQLKNLDHKFGRKVVEYDCKFVKGNFKFKIKITSTPNASTVITVKKRSKHSNTSSNKAFEKFNDDVERVIRNAGRS</sequence>
<accession>P34244</accession>
<accession>A2NP40</accession>
<accession>D6VXI6</accession>
<evidence type="ECO:0000255" key="1">
    <source>
        <dbReference type="PROSITE-ProRule" id="PRU00159"/>
    </source>
</evidence>
<evidence type="ECO:0000255" key="2">
    <source>
        <dbReference type="PROSITE-ProRule" id="PRU10027"/>
    </source>
</evidence>
<evidence type="ECO:0000256" key="3">
    <source>
        <dbReference type="SAM" id="MobiDB-lite"/>
    </source>
</evidence>
<evidence type="ECO:0000269" key="4">
    <source>
    </source>
</evidence>
<evidence type="ECO:0000305" key="5"/>
<evidence type="ECO:0007744" key="6">
    <source>
    </source>
</evidence>
<evidence type="ECO:0007744" key="7">
    <source>
    </source>
</evidence>
<evidence type="ECO:0007744" key="8">
    <source>
    </source>
</evidence>
<dbReference type="EC" id="2.7.11.1"/>
<dbReference type="EMBL" id="U65921">
    <property type="protein sequence ID" value="AAB07455.1"/>
    <property type="molecule type" value="Genomic_DNA"/>
</dbReference>
<dbReference type="EMBL" id="X71133">
    <property type="protein sequence ID" value="CAA50456.1"/>
    <property type="molecule type" value="Genomic_DNA"/>
</dbReference>
<dbReference type="EMBL" id="Z28101">
    <property type="protein sequence ID" value="CAA81941.1"/>
    <property type="molecule type" value="Genomic_DNA"/>
</dbReference>
<dbReference type="EMBL" id="BK006944">
    <property type="protein sequence ID" value="DAA09056.2"/>
    <property type="molecule type" value="Genomic_DNA"/>
</dbReference>
<dbReference type="PIR" id="S37928">
    <property type="entry name" value="S37928"/>
</dbReference>
<dbReference type="RefSeq" id="NP_012821.2">
    <property type="nucleotide sequence ID" value="NM_001179667.2"/>
</dbReference>
<dbReference type="PDB" id="5G04">
    <property type="method" value="EM"/>
    <property type="resolution" value="4.00 A"/>
    <property type="chains" value="S=667-872"/>
</dbReference>
<dbReference type="PDB" id="5KHR">
    <property type="method" value="EM"/>
    <property type="resolution" value="6.10 A"/>
    <property type="chains" value="S=774-837"/>
</dbReference>
<dbReference type="PDB" id="5L9T">
    <property type="method" value="EM"/>
    <property type="resolution" value="6.40 A"/>
    <property type="chains" value="S=818-842"/>
</dbReference>
<dbReference type="PDB" id="5L9U">
    <property type="method" value="EM"/>
    <property type="resolution" value="6.40 A"/>
    <property type="chains" value="S=768-842"/>
</dbReference>
<dbReference type="PDB" id="8A3T">
    <property type="method" value="EM"/>
    <property type="resolution" value="3.50 A"/>
    <property type="chains" value="S=1-1518"/>
</dbReference>
<dbReference type="PDBsum" id="5G04"/>
<dbReference type="PDBsum" id="5KHR"/>
<dbReference type="PDBsum" id="5L9T"/>
<dbReference type="PDBsum" id="5L9U"/>
<dbReference type="PDBsum" id="8A3T"/>
<dbReference type="EMDB" id="EMD-3385"/>
<dbReference type="SMR" id="P34244"/>
<dbReference type="BioGRID" id="34032">
    <property type="interactions" value="502"/>
</dbReference>
<dbReference type="DIP" id="DIP-3022N"/>
<dbReference type="ELM" id="P34244"/>
<dbReference type="FunCoup" id="P34244">
    <property type="interactions" value="715"/>
</dbReference>
<dbReference type="IntAct" id="P34244">
    <property type="interactions" value="23"/>
</dbReference>
<dbReference type="MINT" id="P34244"/>
<dbReference type="STRING" id="4932.YKL101W"/>
<dbReference type="iPTMnet" id="P34244"/>
<dbReference type="PaxDb" id="4932-YKL101W"/>
<dbReference type="PeptideAtlas" id="P34244"/>
<dbReference type="EnsemblFungi" id="YKL101W_mRNA">
    <property type="protein sequence ID" value="YKL101W"/>
    <property type="gene ID" value="YKL101W"/>
</dbReference>
<dbReference type="GeneID" id="853760"/>
<dbReference type="KEGG" id="sce:YKL101W"/>
<dbReference type="AGR" id="SGD:S000001584"/>
<dbReference type="SGD" id="S000001584">
    <property type="gene designation" value="HSL1"/>
</dbReference>
<dbReference type="VEuPathDB" id="FungiDB:YKL101W"/>
<dbReference type="eggNOG" id="KOG0588">
    <property type="taxonomic scope" value="Eukaryota"/>
</dbReference>
<dbReference type="HOGENOM" id="CLU_003225_0_0_1"/>
<dbReference type="InParanoid" id="P34244"/>
<dbReference type="OMA" id="HLPFNDD"/>
<dbReference type="OrthoDB" id="504170at2759"/>
<dbReference type="BioCyc" id="YEAST:G3O-31891-MONOMER"/>
<dbReference type="BioGRID-ORCS" id="853760">
    <property type="hits" value="6 hits in 13 CRISPR screens"/>
</dbReference>
<dbReference type="EvolutionaryTrace" id="P34244"/>
<dbReference type="PRO" id="PR:P34244"/>
<dbReference type="Proteomes" id="UP000002311">
    <property type="component" value="Chromosome XI"/>
</dbReference>
<dbReference type="RNAct" id="P34244">
    <property type="molecule type" value="protein"/>
</dbReference>
<dbReference type="GO" id="GO:0005935">
    <property type="term" value="C:cellular bud neck"/>
    <property type="evidence" value="ECO:0000314"/>
    <property type="project" value="SGD"/>
</dbReference>
<dbReference type="GO" id="GO:0000144">
    <property type="term" value="C:cellular bud neck septin ring"/>
    <property type="evidence" value="ECO:0000314"/>
    <property type="project" value="SGD"/>
</dbReference>
<dbReference type="GO" id="GO:0005737">
    <property type="term" value="C:cytoplasm"/>
    <property type="evidence" value="ECO:0000318"/>
    <property type="project" value="GO_Central"/>
</dbReference>
<dbReference type="GO" id="GO:0005634">
    <property type="term" value="C:nucleus"/>
    <property type="evidence" value="ECO:0000318"/>
    <property type="project" value="GO_Central"/>
</dbReference>
<dbReference type="GO" id="GO:0005524">
    <property type="term" value="F:ATP binding"/>
    <property type="evidence" value="ECO:0007669"/>
    <property type="project" value="UniProtKB-KW"/>
</dbReference>
<dbReference type="GO" id="GO:0004672">
    <property type="term" value="F:protein kinase activity"/>
    <property type="evidence" value="ECO:0000314"/>
    <property type="project" value="SGD"/>
</dbReference>
<dbReference type="GO" id="GO:0106310">
    <property type="term" value="F:protein serine kinase activity"/>
    <property type="evidence" value="ECO:0007669"/>
    <property type="project" value="RHEA"/>
</dbReference>
<dbReference type="GO" id="GO:0004674">
    <property type="term" value="F:protein serine/threonine kinase activity"/>
    <property type="evidence" value="ECO:0000314"/>
    <property type="project" value="SGD"/>
</dbReference>
<dbReference type="GO" id="GO:0000086">
    <property type="term" value="P:G2/M transition of mitotic cell cycle"/>
    <property type="evidence" value="ECO:0000315"/>
    <property type="project" value="SGD"/>
</dbReference>
<dbReference type="GO" id="GO:0044879">
    <property type="term" value="P:mitotic morphogenesis checkpoint signaling"/>
    <property type="evidence" value="ECO:0000315"/>
    <property type="project" value="SGD"/>
</dbReference>
<dbReference type="GO" id="GO:1900481">
    <property type="term" value="P:negative regulation of diacylglycerol biosynthetic process"/>
    <property type="evidence" value="ECO:0000314"/>
    <property type="project" value="SGD"/>
</dbReference>
<dbReference type="GO" id="GO:0030163">
    <property type="term" value="P:protein catabolic process"/>
    <property type="evidence" value="ECO:0000315"/>
    <property type="project" value="SGD"/>
</dbReference>
<dbReference type="GO" id="GO:1902935">
    <property type="term" value="P:protein localization to septin ring"/>
    <property type="evidence" value="ECO:0000315"/>
    <property type="project" value="SGD"/>
</dbReference>
<dbReference type="GO" id="GO:0051726">
    <property type="term" value="P:regulation of cell cycle"/>
    <property type="evidence" value="ECO:0000315"/>
    <property type="project" value="SGD"/>
</dbReference>
<dbReference type="CDD" id="cd14081">
    <property type="entry name" value="STKc_BRSK1_2"/>
    <property type="match status" value="1"/>
</dbReference>
<dbReference type="FunFam" id="1.10.510.10:FF:000394">
    <property type="entry name" value="Serine/threonine-protein kinase HSL1"/>
    <property type="match status" value="1"/>
</dbReference>
<dbReference type="Gene3D" id="1.10.510.10">
    <property type="entry name" value="Transferase(Phosphotransferase) domain 1"/>
    <property type="match status" value="1"/>
</dbReference>
<dbReference type="InterPro" id="IPR011009">
    <property type="entry name" value="Kinase-like_dom_sf"/>
</dbReference>
<dbReference type="InterPro" id="IPR000719">
    <property type="entry name" value="Prot_kinase_dom"/>
</dbReference>
<dbReference type="InterPro" id="IPR017441">
    <property type="entry name" value="Protein_kinase_ATP_BS"/>
</dbReference>
<dbReference type="InterPro" id="IPR008271">
    <property type="entry name" value="Ser/Thr_kinase_AS"/>
</dbReference>
<dbReference type="PANTHER" id="PTHR24346">
    <property type="entry name" value="MAP/MICROTUBULE AFFINITY-REGULATING KINASE"/>
    <property type="match status" value="1"/>
</dbReference>
<dbReference type="PANTHER" id="PTHR24346:SF110">
    <property type="entry name" value="NON-SPECIFIC SERINE_THREONINE PROTEIN KINASE"/>
    <property type="match status" value="1"/>
</dbReference>
<dbReference type="Pfam" id="PF00069">
    <property type="entry name" value="Pkinase"/>
    <property type="match status" value="1"/>
</dbReference>
<dbReference type="SMART" id="SM00220">
    <property type="entry name" value="S_TKc"/>
    <property type="match status" value="1"/>
</dbReference>
<dbReference type="SUPFAM" id="SSF56112">
    <property type="entry name" value="Protein kinase-like (PK-like)"/>
    <property type="match status" value="1"/>
</dbReference>
<dbReference type="PROSITE" id="PS00107">
    <property type="entry name" value="PROTEIN_KINASE_ATP"/>
    <property type="match status" value="1"/>
</dbReference>
<dbReference type="PROSITE" id="PS50011">
    <property type="entry name" value="PROTEIN_KINASE_DOM"/>
    <property type="match status" value="1"/>
</dbReference>
<dbReference type="PROSITE" id="PS00108">
    <property type="entry name" value="PROTEIN_KINASE_ST"/>
    <property type="match status" value="1"/>
</dbReference>
<feature type="chain" id="PRO_0000086148" description="Probable serine/threonine-protein kinase HSL1">
    <location>
        <begin position="1"/>
        <end position="1518"/>
    </location>
</feature>
<feature type="domain" description="Protein kinase" evidence="1">
    <location>
        <begin position="81"/>
        <end position="369"/>
    </location>
</feature>
<feature type="region of interest" description="Disordered" evidence="3">
    <location>
        <begin position="1"/>
        <end position="43"/>
    </location>
</feature>
<feature type="region of interest" description="Disordered" evidence="3">
    <location>
        <begin position="55"/>
        <end position="83"/>
    </location>
</feature>
<feature type="region of interest" description="Disordered" evidence="3">
    <location>
        <begin position="467"/>
        <end position="502"/>
    </location>
</feature>
<feature type="region of interest" description="Disordered" evidence="3">
    <location>
        <begin position="599"/>
        <end position="651"/>
    </location>
</feature>
<feature type="region of interest" description="Disordered" evidence="3">
    <location>
        <begin position="741"/>
        <end position="783"/>
    </location>
</feature>
<feature type="region of interest" description="Disordered" evidence="3">
    <location>
        <begin position="856"/>
        <end position="898"/>
    </location>
</feature>
<feature type="region of interest" description="Disordered" evidence="3">
    <location>
        <begin position="1005"/>
        <end position="1030"/>
    </location>
</feature>
<feature type="region of interest" description="Disordered" evidence="3">
    <location>
        <begin position="1150"/>
        <end position="1170"/>
    </location>
</feature>
<feature type="region of interest" description="Disordered" evidence="3">
    <location>
        <begin position="1220"/>
        <end position="1243"/>
    </location>
</feature>
<feature type="region of interest" description="Disordered" evidence="3">
    <location>
        <begin position="1259"/>
        <end position="1291"/>
    </location>
</feature>
<feature type="compositionally biased region" description="Polar residues" evidence="3">
    <location>
        <begin position="55"/>
        <end position="68"/>
    </location>
</feature>
<feature type="compositionally biased region" description="Polar residues" evidence="3">
    <location>
        <begin position="492"/>
        <end position="501"/>
    </location>
</feature>
<feature type="compositionally biased region" description="Low complexity" evidence="3">
    <location>
        <begin position="599"/>
        <end position="611"/>
    </location>
</feature>
<feature type="compositionally biased region" description="Basic and acidic residues" evidence="3">
    <location>
        <begin position="746"/>
        <end position="758"/>
    </location>
</feature>
<feature type="compositionally biased region" description="Polar residues" evidence="3">
    <location>
        <begin position="759"/>
        <end position="774"/>
    </location>
</feature>
<feature type="compositionally biased region" description="Basic and acidic residues" evidence="3">
    <location>
        <begin position="856"/>
        <end position="876"/>
    </location>
</feature>
<feature type="compositionally biased region" description="Polar residues" evidence="3">
    <location>
        <begin position="1222"/>
        <end position="1243"/>
    </location>
</feature>
<feature type="compositionally biased region" description="Polar residues" evidence="3">
    <location>
        <begin position="1265"/>
        <end position="1278"/>
    </location>
</feature>
<feature type="active site" description="Proton acceptor" evidence="1 2">
    <location>
        <position position="239"/>
    </location>
</feature>
<feature type="binding site" evidence="1">
    <location>
        <begin position="87"/>
        <end position="95"/>
    </location>
    <ligand>
        <name>ATP</name>
        <dbReference type="ChEBI" id="CHEBI:30616"/>
    </ligand>
</feature>
<feature type="binding site" evidence="1">
    <location>
        <position position="110"/>
    </location>
    <ligand>
        <name>ATP</name>
        <dbReference type="ChEBI" id="CHEBI:30616"/>
    </ligand>
</feature>
<feature type="modified residue" description="Phosphoserine" evidence="7">
    <location>
        <position position="511"/>
    </location>
</feature>
<feature type="modified residue" description="Phosphoserine" evidence="6">
    <location>
        <position position="629"/>
    </location>
</feature>
<feature type="modified residue" description="Phosphoserine" evidence="8">
    <location>
        <position position="685"/>
    </location>
</feature>
<feature type="modified residue" description="Phosphoserine" evidence="8">
    <location>
        <position position="837"/>
    </location>
</feature>
<feature type="modified residue" description="Phosphoserine" evidence="8">
    <location>
        <position position="866"/>
    </location>
</feature>
<feature type="modified residue" description="Phosphoserine" evidence="6 7">
    <location>
        <position position="1220"/>
    </location>
</feature>
<feature type="modified residue" description="Phosphoserine" evidence="8">
    <location>
        <position position="1250"/>
    </location>
</feature>
<feature type="modified residue" description="Phosphoserine" evidence="6 7">
    <location>
        <position position="1284"/>
    </location>
</feature>
<feature type="modified residue" description="Phosphoserine" evidence="6">
    <location>
        <position position="1287"/>
    </location>
</feature>
<feature type="modified residue" description="Phosphoserine" evidence="7">
    <location>
        <position position="1325"/>
    </location>
</feature>
<feature type="sequence conflict" description="In Ref. 1; AAB07455, 2; CAA50456 and 3; CAA81941." evidence="5" ref="1 2 3">
    <original>T</original>
    <variation>S</variation>
    <location>
        <position position="1482"/>
    </location>
</feature>
<keyword id="KW-0002">3D-structure</keyword>
<keyword id="KW-0067">ATP-binding</keyword>
<keyword id="KW-0418">Kinase</keyword>
<keyword id="KW-0547">Nucleotide-binding</keyword>
<keyword id="KW-0597">Phosphoprotein</keyword>
<keyword id="KW-1185">Reference proteome</keyword>
<keyword id="KW-0723">Serine/threonine-protein kinase</keyword>
<keyword id="KW-0808">Transferase</keyword>
<reference key="1">
    <citation type="journal article" date="1996" name="Genes Dev.">
        <title>A search for proteins that interact genetically with histone H3 and H4 amino termini uncovers novel regulators of the Swe1 kinase in Saccharomyces cerevisiae.</title>
        <authorList>
            <person name="Ma X.-J."/>
            <person name="Lu Q."/>
            <person name="Grunstein M."/>
        </authorList>
    </citation>
    <scope>NUCLEOTIDE SEQUENCE [GENOMIC DNA]</scope>
</reference>
<reference key="2">
    <citation type="journal article" date="1993" name="Yeast">
        <title>DNA sequence analysis of a 17 kb fragment of yeast chromosome XI physically localizes the MRB1 gene and reveals eight new open reading frames, including a homologue of the KIN1/KIN2 and SNF1 protein kinases.</title>
        <authorList>
            <person name="Pallier C."/>
            <person name="Valens M."/>
            <person name="Puzos V."/>
            <person name="Fukuhara H."/>
            <person name="Cheret G."/>
            <person name="Sor F."/>
            <person name="Bolotin-Fukuhara M."/>
        </authorList>
    </citation>
    <scope>NUCLEOTIDE SEQUENCE [GENOMIC DNA]</scope>
    <source>
        <strain>ATCC 204508 / S288c</strain>
    </source>
</reference>
<reference key="3">
    <citation type="journal article" date="1994" name="Nature">
        <title>Complete DNA sequence of yeast chromosome XI.</title>
        <authorList>
            <person name="Dujon B."/>
            <person name="Alexandraki D."/>
            <person name="Andre B."/>
            <person name="Ansorge W."/>
            <person name="Baladron V."/>
            <person name="Ballesta J.P.G."/>
            <person name="Banrevi A."/>
            <person name="Bolle P.-A."/>
            <person name="Bolotin-Fukuhara M."/>
            <person name="Bossier P."/>
            <person name="Bou G."/>
            <person name="Boyer J."/>
            <person name="Buitrago M.J."/>
            <person name="Cheret G."/>
            <person name="Colleaux L."/>
            <person name="Daignan-Fornier B."/>
            <person name="del Rey F."/>
            <person name="Dion C."/>
            <person name="Domdey H."/>
            <person name="Duesterhoeft A."/>
            <person name="Duesterhus S."/>
            <person name="Entian K.-D."/>
            <person name="Erfle H."/>
            <person name="Esteban P.F."/>
            <person name="Feldmann H."/>
            <person name="Fernandes L."/>
            <person name="Fobo G.M."/>
            <person name="Fritz C."/>
            <person name="Fukuhara H."/>
            <person name="Gabel C."/>
            <person name="Gaillon L."/>
            <person name="Garcia-Cantalejo J.M."/>
            <person name="Garcia-Ramirez J.J."/>
            <person name="Gent M.E."/>
            <person name="Ghazvini M."/>
            <person name="Goffeau A."/>
            <person name="Gonzalez A."/>
            <person name="Grothues D."/>
            <person name="Guerreiro P."/>
            <person name="Hegemann J.H."/>
            <person name="Hewitt N."/>
            <person name="Hilger F."/>
            <person name="Hollenberg C.P."/>
            <person name="Horaitis O."/>
            <person name="Indge K.J."/>
            <person name="Jacquier A."/>
            <person name="James C.M."/>
            <person name="Jauniaux J.-C."/>
            <person name="Jimenez A."/>
            <person name="Keuchel H."/>
            <person name="Kirchrath L."/>
            <person name="Kleine K."/>
            <person name="Koetter P."/>
            <person name="Legrain P."/>
            <person name="Liebl S."/>
            <person name="Louis E.J."/>
            <person name="Maia e Silva A."/>
            <person name="Marck C."/>
            <person name="Monnier A.-L."/>
            <person name="Moestl D."/>
            <person name="Mueller S."/>
            <person name="Obermaier B."/>
            <person name="Oliver S.G."/>
            <person name="Pallier C."/>
            <person name="Pascolo S."/>
            <person name="Pfeiffer F."/>
            <person name="Philippsen P."/>
            <person name="Planta R.J."/>
            <person name="Pohl F.M."/>
            <person name="Pohl T.M."/>
            <person name="Poehlmann R."/>
            <person name="Portetelle D."/>
            <person name="Purnelle B."/>
            <person name="Puzos V."/>
            <person name="Ramezani Rad M."/>
            <person name="Rasmussen S.W."/>
            <person name="Remacha M.A."/>
            <person name="Revuelta J.L."/>
            <person name="Richard G.-F."/>
            <person name="Rieger M."/>
            <person name="Rodrigues-Pousada C."/>
            <person name="Rose M."/>
            <person name="Rupp T."/>
            <person name="Santos M.A."/>
            <person name="Schwager C."/>
            <person name="Sensen C."/>
            <person name="Skala J."/>
            <person name="Soares H."/>
            <person name="Sor F."/>
            <person name="Stegemann J."/>
            <person name="Tettelin H."/>
            <person name="Thierry A."/>
            <person name="Tzermia M."/>
            <person name="Urrestarazu L.A."/>
            <person name="van Dyck L."/>
            <person name="van Vliet-Reedijk J.C."/>
            <person name="Valens M."/>
            <person name="Vandenbol M."/>
            <person name="Vilela C."/>
            <person name="Vissers S."/>
            <person name="von Wettstein D."/>
            <person name="Voss H."/>
            <person name="Wiemann S."/>
            <person name="Xu G."/>
            <person name="Zimmermann J."/>
            <person name="Haasemann M."/>
            <person name="Becker I."/>
            <person name="Mewes H.-W."/>
        </authorList>
    </citation>
    <scope>NUCLEOTIDE SEQUENCE [LARGE SCALE GENOMIC DNA]</scope>
    <source>
        <strain>ATCC 204508 / S288c</strain>
    </source>
</reference>
<reference key="4">
    <citation type="journal article" date="2014" name="G3 (Bethesda)">
        <title>The reference genome sequence of Saccharomyces cerevisiae: Then and now.</title>
        <authorList>
            <person name="Engel S.R."/>
            <person name="Dietrich F.S."/>
            <person name="Fisk D.G."/>
            <person name="Binkley G."/>
            <person name="Balakrishnan R."/>
            <person name="Costanzo M.C."/>
            <person name="Dwight S.S."/>
            <person name="Hitz B.C."/>
            <person name="Karra K."/>
            <person name="Nash R.S."/>
            <person name="Weng S."/>
            <person name="Wong E.D."/>
            <person name="Lloyd P."/>
            <person name="Skrzypek M.S."/>
            <person name="Miyasato S.R."/>
            <person name="Simison M."/>
            <person name="Cherry J.M."/>
        </authorList>
    </citation>
    <scope>GENOME REANNOTATION</scope>
    <scope>SEQUENCE REVISION TO 1482</scope>
    <source>
        <strain>ATCC 204508 / S288c</strain>
    </source>
</reference>
<reference key="5">
    <citation type="journal article" date="2003" name="Nature">
        <title>Global analysis of protein localization in budding yeast.</title>
        <authorList>
            <person name="Huh W.-K."/>
            <person name="Falvo J.V."/>
            <person name="Gerke L.C."/>
            <person name="Carroll A.S."/>
            <person name="Howson R.W."/>
            <person name="Weissman J.S."/>
            <person name="O'Shea E.K."/>
        </authorList>
    </citation>
    <scope>SUBCELLULAR LOCATION [LARGE SCALE ANALYSIS]</scope>
</reference>
<reference key="6">
    <citation type="journal article" date="2007" name="Proc. Natl. Acad. Sci. U.S.A.">
        <title>Analysis of phosphorylation sites on proteins from Saccharomyces cerevisiae by electron transfer dissociation (ETD) mass spectrometry.</title>
        <authorList>
            <person name="Chi A."/>
            <person name="Huttenhower C."/>
            <person name="Geer L.Y."/>
            <person name="Coon J.J."/>
            <person name="Syka J.E.P."/>
            <person name="Bai D.L."/>
            <person name="Shabanowitz J."/>
            <person name="Burke D.J."/>
            <person name="Troyanskaya O.G."/>
            <person name="Hunt D.F."/>
        </authorList>
    </citation>
    <scope>PHOSPHORYLATION [LARGE SCALE ANALYSIS] AT SER-629; SER-1220; SER-1284 AND SER-1287</scope>
    <scope>IDENTIFICATION BY MASS SPECTROMETRY [LARGE SCALE ANALYSIS]</scope>
</reference>
<reference key="7">
    <citation type="journal article" date="2008" name="Mol. Cell. Proteomics">
        <title>A multidimensional chromatography technology for in-depth phosphoproteome analysis.</title>
        <authorList>
            <person name="Albuquerque C.P."/>
            <person name="Smolka M.B."/>
            <person name="Payne S.H."/>
            <person name="Bafna V."/>
            <person name="Eng J."/>
            <person name="Zhou H."/>
        </authorList>
    </citation>
    <scope>PHOSPHORYLATION [LARGE SCALE ANALYSIS] AT SER-511; SER-1220; SER-1284 AND SER-1325</scope>
    <scope>IDENTIFICATION BY MASS SPECTROMETRY [LARGE SCALE ANALYSIS]</scope>
</reference>
<reference key="8">
    <citation type="journal article" date="2009" name="Science">
        <title>Global analysis of Cdk1 substrate phosphorylation sites provides insights into evolution.</title>
        <authorList>
            <person name="Holt L.J."/>
            <person name="Tuch B.B."/>
            <person name="Villen J."/>
            <person name="Johnson A.D."/>
            <person name="Gygi S.P."/>
            <person name="Morgan D.O."/>
        </authorList>
    </citation>
    <scope>PHOSPHORYLATION [LARGE SCALE ANALYSIS] AT SER-685; SER-837; SER-866 AND SER-1250</scope>
    <scope>IDENTIFICATION BY MASS SPECTROMETRY [LARGE SCALE ANALYSIS]</scope>
</reference>
<protein>
    <recommendedName>
        <fullName>Probable serine/threonine-protein kinase HSL1</fullName>
        <ecNumber>2.7.11.1</ecNumber>
    </recommendedName>
</protein>
<gene>
    <name type="primary">HSL1</name>
    <name type="ordered locus">YKL101W</name>
    <name type="ORF">YKL453</name>
</gene>
<organism>
    <name type="scientific">Saccharomyces cerevisiae (strain ATCC 204508 / S288c)</name>
    <name type="common">Baker's yeast</name>
    <dbReference type="NCBI Taxonomy" id="559292"/>
    <lineage>
        <taxon>Eukaryota</taxon>
        <taxon>Fungi</taxon>
        <taxon>Dikarya</taxon>
        <taxon>Ascomycota</taxon>
        <taxon>Saccharomycotina</taxon>
        <taxon>Saccharomycetes</taxon>
        <taxon>Saccharomycetales</taxon>
        <taxon>Saccharomycetaceae</taxon>
        <taxon>Saccharomyces</taxon>
    </lineage>
</organism>
<name>HSL1_YEAST</name>